<name>PIGX_RAT</name>
<comment type="function">
    <text evidence="2">Stabilizing subunit of the glycosylphosphatidylinositol-mannosyltransferase I complex which catalyzes the transfer of the first mannose, via an alpha-1,4 bond from a dolichol-phosphate-mannose (Dol-P-Man) to the glucosaminyl acyl phosphatidylinositol (GlcN-(acyl)PI) intermediate to generate alpha-D-Man-(1-&gt;4)-alpha-D-GlcN-(1-&gt;6)-(1-radyl,2-acyl-sn-glycero-3-phospho)-2-acyl-inositol and participates in the sixth step of the glycosylphosphatidylinositol-anchor biosynthesis (PubMed:15635094). Probably acts by stabilizing the mannosyltransferase PIGM (PubMed:15635094).</text>
</comment>
<comment type="pathway">
    <text evidence="2">Glycolipid biosynthesis; glycosylphosphatidylinositol-anchor biosynthesis.</text>
</comment>
<comment type="subunit">
    <text evidence="2">Part of the glycosylphosphatidylinositol-mannosyltransferase I complex that is composed of PIGM and PIGX (PubMed:15635094). Interacts with PIGM; PIGX stabilizes PIGM (PubMed:15635094).</text>
</comment>
<comment type="subcellular location">
    <subcellularLocation>
        <location evidence="2">Endoplasmic reticulum membrane</location>
        <topology evidence="2">Single-pass type I membrane protein</topology>
    </subcellularLocation>
</comment>
<comment type="similarity">
    <text evidence="4">Belongs to the PIGX family.</text>
</comment>
<comment type="caution">
    <text evidence="4">PubMed:15635094 reported that the initiator methionine is coded by an unusual start codon, CTG.</text>
</comment>
<comment type="sequence caution" evidence="4">
    <conflict type="miscellaneous discrepancy">
        <sequence resource="EMBL-CDS" id="BAD61008"/>
    </conflict>
    <text>Unusual initiator. The initiator methionine is coded by a non-canonical CTG leucine codon.</text>
</comment>
<keyword id="KW-0903">Direct protein sequencing</keyword>
<keyword id="KW-0256">Endoplasmic reticulum</keyword>
<keyword id="KW-0325">Glycoprotein</keyword>
<keyword id="KW-0337">GPI-anchor biosynthesis</keyword>
<keyword id="KW-0472">Membrane</keyword>
<keyword id="KW-1185">Reference proteome</keyword>
<keyword id="KW-0732">Signal</keyword>
<keyword id="KW-0812">Transmembrane</keyword>
<keyword id="KW-1133">Transmembrane helix</keyword>
<sequence length="252" mass="28423">MAASALAWLLLWAAGLVGRLAADISDARFSDGVRATCSEIILRQEFLKDGFHRDLLIKVKFGESIEDLQTCRLLIKHYIPTGLFVDPYELASLRERNITEAVMVSESFNLEAPNYLSTESAVLIYARQDAQCIDCFQAFLPVHYRYHRPHKKDGDTLIVVNNPDLLMHCDQEFPILKCWAQSEVAAPCSLKSEEICQWKNMQYKSILKNLTVQVPVGLTIHTSLVCSVTLLITVLCSTLILLAVFKYGHFSL</sequence>
<organism>
    <name type="scientific">Rattus norvegicus</name>
    <name type="common">Rat</name>
    <dbReference type="NCBI Taxonomy" id="10116"/>
    <lineage>
        <taxon>Eukaryota</taxon>
        <taxon>Metazoa</taxon>
        <taxon>Chordata</taxon>
        <taxon>Craniata</taxon>
        <taxon>Vertebrata</taxon>
        <taxon>Euteleostomi</taxon>
        <taxon>Mammalia</taxon>
        <taxon>Eutheria</taxon>
        <taxon>Euarchontoglires</taxon>
        <taxon>Glires</taxon>
        <taxon>Rodentia</taxon>
        <taxon>Myomorpha</taxon>
        <taxon>Muroidea</taxon>
        <taxon>Muridae</taxon>
        <taxon>Murinae</taxon>
        <taxon>Rattus</taxon>
    </lineage>
</organism>
<evidence type="ECO:0000255" key="1"/>
<evidence type="ECO:0000269" key="2">
    <source>
    </source>
</evidence>
<evidence type="ECO:0000303" key="3">
    <source>
    </source>
</evidence>
<evidence type="ECO:0000305" key="4"/>
<evidence type="ECO:0000312" key="5">
    <source>
        <dbReference type="RGD" id="1307289"/>
    </source>
</evidence>
<gene>
    <name evidence="5" type="primary">Pigx</name>
</gene>
<accession>Q60GF7</accession>
<feature type="signal peptide" evidence="2">
    <location>
        <begin position="1"/>
        <end position="22"/>
    </location>
</feature>
<feature type="chain" id="PRO_0000246297" description="GPI alpha-1,4-mannosyltransferase I, stabilizing subunit">
    <location>
        <begin position="23"/>
        <end position="252"/>
    </location>
</feature>
<feature type="transmembrane region" description="Helical" evidence="1">
    <location>
        <begin position="225"/>
        <end position="245"/>
    </location>
</feature>
<feature type="glycosylation site" description="N-linked (GlcNAc...) asparagine" evidence="1">
    <location>
        <position position="97"/>
    </location>
</feature>
<feature type="glycosylation site" description="N-linked (GlcNAc...) asparagine" evidence="1">
    <location>
        <position position="209"/>
    </location>
</feature>
<protein>
    <recommendedName>
        <fullName evidence="4">GPI alpha-1,4-mannosyltransferase I, stabilizing subunit</fullName>
    </recommendedName>
    <alternativeName>
        <fullName>Phosphatidylinositol-glycan biosynthesis class X protein</fullName>
        <shortName evidence="3">PIG-X</shortName>
    </alternativeName>
</protein>
<proteinExistence type="evidence at protein level"/>
<reference key="1">
    <citation type="journal article" date="2005" name="Mol. Biol. Cell">
        <title>Mammalian PIG-X and yeast Pbn1p are the essential components of glycosylphosphatidylinositol-mannosyltransferase I.</title>
        <authorList>
            <person name="Ashida H."/>
            <person name="Hong Y."/>
            <person name="Murakami Y."/>
            <person name="Shishioh N."/>
            <person name="Sugimoto N."/>
            <person name="Kim Y.U."/>
            <person name="Maeda Y."/>
            <person name="Kinoshita T."/>
        </authorList>
    </citation>
    <scope>NUCLEOTIDE SEQUENCE [MRNA]</scope>
    <scope>PROTEIN SEQUENCE OF 23-27</scope>
    <scope>FUNCTION</scope>
    <scope>INTERACTION WITH PIGM</scope>
    <scope>SUBCELLULAR LOCATION</scope>
    <scope>TOPOLOGY</scope>
    <scope>GLYCOSYLATION</scope>
    <scope>INITIATION CODON CTG</scope>
</reference>
<dbReference type="EMBL" id="AB177393">
    <property type="protein sequence ID" value="BAD61008.1"/>
    <property type="status" value="ALT_SEQ"/>
    <property type="molecule type" value="mRNA"/>
</dbReference>
<dbReference type="RefSeq" id="NP_001094121.1">
    <property type="nucleotide sequence ID" value="NM_001100651.1"/>
</dbReference>
<dbReference type="FunCoup" id="Q60GF7">
    <property type="interactions" value="512"/>
</dbReference>
<dbReference type="STRING" id="10116.ENSRNOP00000042305"/>
<dbReference type="GlyCosmos" id="Q60GF7">
    <property type="glycosylation" value="2 sites, No reported glycans"/>
</dbReference>
<dbReference type="GlyGen" id="Q60GF7">
    <property type="glycosylation" value="2 sites"/>
</dbReference>
<dbReference type="PhosphoSitePlus" id="Q60GF7"/>
<dbReference type="PaxDb" id="10116-ENSRNOP00000042305"/>
<dbReference type="GeneID" id="288041"/>
<dbReference type="KEGG" id="rno:288041"/>
<dbReference type="UCSC" id="RGD:1307289">
    <property type="organism name" value="rat"/>
</dbReference>
<dbReference type="AGR" id="RGD:1307289"/>
<dbReference type="CTD" id="54965"/>
<dbReference type="RGD" id="1307289">
    <property type="gene designation" value="Pigx"/>
</dbReference>
<dbReference type="eggNOG" id="ENOG502S32M">
    <property type="taxonomic scope" value="Eukaryota"/>
</dbReference>
<dbReference type="InParanoid" id="Q60GF7"/>
<dbReference type="OrthoDB" id="67684at9989"/>
<dbReference type="PhylomeDB" id="Q60GF7"/>
<dbReference type="Reactome" id="R-RNO-162710">
    <property type="pathway name" value="Synthesis of glycosylphosphatidylinositol (GPI)"/>
</dbReference>
<dbReference type="UniPathway" id="UPA00196"/>
<dbReference type="PRO" id="PR:Q60GF7"/>
<dbReference type="Proteomes" id="UP000002494">
    <property type="component" value="Unplaced"/>
</dbReference>
<dbReference type="GO" id="GO:0005789">
    <property type="term" value="C:endoplasmic reticulum membrane"/>
    <property type="evidence" value="ECO:0007669"/>
    <property type="project" value="UniProtKB-SubCell"/>
</dbReference>
<dbReference type="GO" id="GO:1990529">
    <property type="term" value="C:glycosylphosphatidylinositol-mannosyltransferase I complex"/>
    <property type="evidence" value="ECO:0000314"/>
    <property type="project" value="UniProtKB"/>
</dbReference>
<dbReference type="GO" id="GO:0006506">
    <property type="term" value="P:GPI anchor biosynthetic process"/>
    <property type="evidence" value="ECO:0000314"/>
    <property type="project" value="UniProtKB"/>
</dbReference>
<dbReference type="InterPro" id="IPR013233">
    <property type="entry name" value="PIG-X/PBN1"/>
</dbReference>
<dbReference type="InterPro" id="IPR040039">
    <property type="entry name" value="PIGX"/>
</dbReference>
<dbReference type="PANTHER" id="PTHR28650">
    <property type="entry name" value="PHOSPHATIDYLINOSITOL-GLYCAN BIOSYNTHESIS CLASS X PROTEIN"/>
    <property type="match status" value="1"/>
</dbReference>
<dbReference type="PANTHER" id="PTHR28650:SF1">
    <property type="entry name" value="PHOSPHATIDYLINOSITOL-GLYCAN BIOSYNTHESIS CLASS X PROTEIN"/>
    <property type="match status" value="1"/>
</dbReference>
<dbReference type="Pfam" id="PF08320">
    <property type="entry name" value="PIG-X"/>
    <property type="match status" value="1"/>
</dbReference>
<dbReference type="SMART" id="SM00780">
    <property type="entry name" value="PIG-X"/>
    <property type="match status" value="1"/>
</dbReference>